<sequence length="119" mass="13252">MPKGKKEKVERRQRIHDSIRESMFGTSVRPRLSVYRSNEHIYAQLVDDMEGHTLTSASTLADDVEGETPTEESRSVGELLAERAEDAGIDKAVFDRGGYKYQGRVRALAEGARDGGLQL</sequence>
<organism>
    <name type="scientific">Salinibacter ruber (strain DSM 13855 / M31)</name>
    <dbReference type="NCBI Taxonomy" id="309807"/>
    <lineage>
        <taxon>Bacteria</taxon>
        <taxon>Pseudomonadati</taxon>
        <taxon>Rhodothermota</taxon>
        <taxon>Rhodothermia</taxon>
        <taxon>Rhodothermales</taxon>
        <taxon>Salinibacteraceae</taxon>
        <taxon>Salinibacter</taxon>
    </lineage>
</organism>
<protein>
    <recommendedName>
        <fullName evidence="1">Large ribosomal subunit protein uL18</fullName>
    </recommendedName>
    <alternativeName>
        <fullName evidence="3">50S ribosomal protein L18</fullName>
    </alternativeName>
</protein>
<proteinExistence type="inferred from homology"/>
<feature type="chain" id="PRO_0000251366" description="Large ribosomal subunit protein uL18">
    <location>
        <begin position="1"/>
        <end position="119"/>
    </location>
</feature>
<feature type="region of interest" description="Disordered" evidence="2">
    <location>
        <begin position="54"/>
        <end position="76"/>
    </location>
</feature>
<reference key="1">
    <citation type="journal article" date="2005" name="Proc. Natl. Acad. Sci. U.S.A.">
        <title>The genome of Salinibacter ruber: convergence and gene exchange among hyperhalophilic bacteria and archaea.</title>
        <authorList>
            <person name="Mongodin E.F."/>
            <person name="Nelson K.E."/>
            <person name="Daugherty S."/>
            <person name="DeBoy R.T."/>
            <person name="Wister J."/>
            <person name="Khouri H."/>
            <person name="Weidman J."/>
            <person name="Walsh D.A."/>
            <person name="Papke R.T."/>
            <person name="Sanchez Perez G."/>
            <person name="Sharma A.K."/>
            <person name="Nesbo C.L."/>
            <person name="MacLeod D."/>
            <person name="Bapteste E."/>
            <person name="Doolittle W.F."/>
            <person name="Charlebois R.L."/>
            <person name="Legault B."/>
            <person name="Rodriguez-Valera F."/>
        </authorList>
    </citation>
    <scope>NUCLEOTIDE SEQUENCE [LARGE SCALE GENOMIC DNA]</scope>
    <source>
        <strain>DSM 13855 / CECT 5946 / M31</strain>
    </source>
</reference>
<gene>
    <name evidence="1" type="primary">rplR</name>
    <name type="ordered locus">SRU_1051</name>
</gene>
<comment type="function">
    <text evidence="1">This is one of the proteins that bind and probably mediate the attachment of the 5S RNA into the large ribosomal subunit, where it forms part of the central protuberance.</text>
</comment>
<comment type="subunit">
    <text evidence="1">Part of the 50S ribosomal subunit; part of the 5S rRNA/L5/L18/L25 subcomplex. Contacts the 5S and 23S rRNAs.</text>
</comment>
<comment type="similarity">
    <text evidence="1">Belongs to the universal ribosomal protein uL18 family.</text>
</comment>
<dbReference type="EMBL" id="CP000159">
    <property type="protein sequence ID" value="ABC44046.1"/>
    <property type="molecule type" value="Genomic_DNA"/>
</dbReference>
<dbReference type="RefSeq" id="WP_011403811.1">
    <property type="nucleotide sequence ID" value="NC_007677.1"/>
</dbReference>
<dbReference type="RefSeq" id="YP_445183.1">
    <property type="nucleotide sequence ID" value="NC_007677.1"/>
</dbReference>
<dbReference type="SMR" id="Q2S3P8"/>
<dbReference type="STRING" id="309807.SRU_1051"/>
<dbReference type="EnsemblBacteria" id="ABC44046">
    <property type="protein sequence ID" value="ABC44046"/>
    <property type="gene ID" value="SRU_1051"/>
</dbReference>
<dbReference type="GeneID" id="83727980"/>
<dbReference type="KEGG" id="sru:SRU_1051"/>
<dbReference type="PATRIC" id="fig|309807.25.peg.1089"/>
<dbReference type="eggNOG" id="COG0256">
    <property type="taxonomic scope" value="Bacteria"/>
</dbReference>
<dbReference type="HOGENOM" id="CLU_098841_0_1_10"/>
<dbReference type="OrthoDB" id="9810939at2"/>
<dbReference type="Proteomes" id="UP000008674">
    <property type="component" value="Chromosome"/>
</dbReference>
<dbReference type="GO" id="GO:0022625">
    <property type="term" value="C:cytosolic large ribosomal subunit"/>
    <property type="evidence" value="ECO:0007669"/>
    <property type="project" value="TreeGrafter"/>
</dbReference>
<dbReference type="GO" id="GO:0008097">
    <property type="term" value="F:5S rRNA binding"/>
    <property type="evidence" value="ECO:0007669"/>
    <property type="project" value="TreeGrafter"/>
</dbReference>
<dbReference type="GO" id="GO:0003735">
    <property type="term" value="F:structural constituent of ribosome"/>
    <property type="evidence" value="ECO:0007669"/>
    <property type="project" value="InterPro"/>
</dbReference>
<dbReference type="GO" id="GO:0006412">
    <property type="term" value="P:translation"/>
    <property type="evidence" value="ECO:0007669"/>
    <property type="project" value="UniProtKB-UniRule"/>
</dbReference>
<dbReference type="CDD" id="cd00432">
    <property type="entry name" value="Ribosomal_L18_L5e"/>
    <property type="match status" value="1"/>
</dbReference>
<dbReference type="FunFam" id="3.30.420.100:FF:000001">
    <property type="entry name" value="50S ribosomal protein L18"/>
    <property type="match status" value="1"/>
</dbReference>
<dbReference type="Gene3D" id="3.30.420.100">
    <property type="match status" value="1"/>
</dbReference>
<dbReference type="HAMAP" id="MF_01337_B">
    <property type="entry name" value="Ribosomal_uL18_B"/>
    <property type="match status" value="1"/>
</dbReference>
<dbReference type="InterPro" id="IPR004389">
    <property type="entry name" value="Ribosomal_uL18_bac-type"/>
</dbReference>
<dbReference type="InterPro" id="IPR005484">
    <property type="entry name" value="Ribosomal_uL18_bac/euk"/>
</dbReference>
<dbReference type="NCBIfam" id="TIGR00060">
    <property type="entry name" value="L18_bact"/>
    <property type="match status" value="1"/>
</dbReference>
<dbReference type="PANTHER" id="PTHR12899">
    <property type="entry name" value="39S RIBOSOMAL PROTEIN L18, MITOCHONDRIAL"/>
    <property type="match status" value="1"/>
</dbReference>
<dbReference type="PANTHER" id="PTHR12899:SF3">
    <property type="entry name" value="LARGE RIBOSOMAL SUBUNIT PROTEIN UL18M"/>
    <property type="match status" value="1"/>
</dbReference>
<dbReference type="Pfam" id="PF00861">
    <property type="entry name" value="Ribosomal_L18p"/>
    <property type="match status" value="1"/>
</dbReference>
<dbReference type="SUPFAM" id="SSF53137">
    <property type="entry name" value="Translational machinery components"/>
    <property type="match status" value="1"/>
</dbReference>
<keyword id="KW-1185">Reference proteome</keyword>
<keyword id="KW-0687">Ribonucleoprotein</keyword>
<keyword id="KW-0689">Ribosomal protein</keyword>
<keyword id="KW-0694">RNA-binding</keyword>
<keyword id="KW-0699">rRNA-binding</keyword>
<name>RL18_SALRD</name>
<accession>Q2S3P8</accession>
<evidence type="ECO:0000255" key="1">
    <source>
        <dbReference type="HAMAP-Rule" id="MF_01337"/>
    </source>
</evidence>
<evidence type="ECO:0000256" key="2">
    <source>
        <dbReference type="SAM" id="MobiDB-lite"/>
    </source>
</evidence>
<evidence type="ECO:0000305" key="3"/>